<comment type="function">
    <text evidence="1">Probable ATPase of unknown function. Its presence in a non-photosynthetic plant (Epifagus virginiana) and experiments in tobacco indicate that it has an essential function which is probably not related to photosynthesis.</text>
</comment>
<comment type="subcellular location">
    <subcellularLocation>
        <location evidence="1">Plastid</location>
        <location evidence="1">Chloroplast stroma</location>
    </subcellularLocation>
</comment>
<comment type="similarity">
    <text evidence="1">Belongs to the Ycf2 family.</text>
</comment>
<comment type="caution">
    <text evidence="2">There is 1 gene for this protein in each of the chloroplast inverted repeats; while they are usually identical, in this organism they are not. The other copy is AC A4QKX4.</text>
</comment>
<sequence>MKGHQFKSWIFELREIVREIKNSHYFLDSWTQFNSVGSFIHIFFHQERFRKLLDPRIFSILLLRNSQGSTSNRYFTIKGVGLFVVAALLYRINNRNMVESKNLYLKGLLPIPMNSIGPRNDTSEESFGSSNINRLIVSLLYLTKGKKISESCFRDPKESTWVLPITQKCIMPESNWSSRWWRNWIGKKRDFCCKISNETVAGIDISFKDKEKDIKYLEFLFVYYMDDPIRKGHDWELFDRLSPSKRRNIINLNSGQLFEILVKDWICYLMFAFREKIPIEVEGFFKQQGAGSTIQSNDIEHVSHLFSRNKWAISLQNCAQFHMWQFHQDLFVSWGKNPHESDFLRKISRENWIWLDNVWLVNKDRFFSKVRNVSSNIQYDSTRSSFVQVTDSSQLNGSSDQFIDPFDSISNEDSEYHYHTLFNQREIQQLKERSILLDPSFIQTEGREIESDRFPKYLSGYSSMPRLFTEREKRMNNHLLPEESEEFLGNPTRAIRSFFSDRWSELHLGSNPTERSTRDQKLLKKEQDVSFVPSRRSENKEIVNIFKIITYLQNTVSIHPISSDLGCDMVPQDELDMDSSNKISFLNKNPFFDLFHLFHERKRGGYELRHESEERFQEMADLFTLSITEPDLVYHKGFAFSIDSYGLDQRQFLKEVFNSRDESKKKSLLVLPPIFYEENESFYRRIRKNWVRISCGNYLEDPKRVVFASNNIMEAVNQYRLIRNLIQIQFQYSPYGYIRNVLNRFFLMKRPDRNFEYGIQRDLIGNDTLNHSTIMKDTINQHLSNLKKSQKKWFDPLIFLSQTERSINRDPNAYRYKWSNGSKNFQEHLEHFVSERKSRFQVVFDQLCINQYSIDWSEVIDKKDLSKSLRFFLSKLLRFFLSKLLLFLSKLLLFLSNSLPFFFVSFENIPIHRSEIHIYELKGPNDQLCNQLLESIGLQIVHLKKLKPFLLDDHNTSQKSKFLINGGTISPFLFNKIPKWMIDSFHTRKNRRKSFDNTDSYFSIVSHDQDNWLNPVKPFQRSSLISSFSKANRLRFLNNPHHFCFYCNKRFPFYVEKTRLKNSDFTYGQFLTILFIHNKIFSSCGGKKKHAFLERDTISPSSIESQVSNIFISNDFPQSGDERYNLYKSFHFPIRSDPLVRRAIYSIADISGTPLIEGQRVNFERTYCQTLSDMNLSDSEEKSLHQYLNFNSNMGLIHTPCSEKYLQRKKRSLCLKKCVDKGQMDRTFQRDSAFSTLSKWNLFQTYMPWFFTSTGYKYLNLIFLDTFSDLLRILSSSQKFVSIFHDIMHGLDISWRILQKKLCLPQRNLISEISSKSLHNLLLSEEMIHRNNESSLISTHLRSPNVREVLYSILFLLLVAGYIVRTHLLFVSRAYSELQTEFEKIKSLMIPSYMIELRKLLDRYPTSELNSFWLKNLFLVALEQLGDCLEEIRGSGGNMLWGGDPAYGVKSIRSKKKDLKINFIDIIDLISIIPNPINRITFSRNTRHLSHTSKKIYSVIRKRKNVSGDWIDDKIESWVANSDSIDDKEREFLVQFSTLRAEKRIDQILLSLTHSDHLSKNDSGYQMIEQPGTIYLRYLVDIHKKYLMNYEFNTSCLAERRIFLAHYQTITYSQTSCGANSFHFPSHGKPFSLRLALSPSRSILVIGSIGTGRSYLVKYLATNSYVPFITVFLNKFLDNKPKGFFIDDIDIDDSDDIDASNDIHRELDTELELLTMMNALTMDMMSEIDRFYITLQFELAKAMSPCIIWIPNIHDLDVNESSYLALGLLVNSLSRDCERCSTRNILVIASTHIPQKVDPALIAPNKLNTCIKIRRLLIPQQRKHFFTLSYTRGFHLEKKMFHTNGFESITMGSSARDLVALTNEALSISITQKKSIIDTNTIRSALHRQTWDLRSQVRSVQDHGILFYQIGRAVAQNVLISNCPIDPISIYMKKKSCNEGDSYLYKWYFELGTSMKKFTILLYLLSCSAGSVAQDLWSLPGPDEKNRITSYGFIENDSDLVHGLLEVQGALVGSSRTEKDCSQFDNDRVTLLFRSEPRDPLYMMQDGSCSIVDQRFLYEKYESGFEEGEGEGVLDPQQIEEDLFNHIVWAPRIWRPRGFLFDCIERPNELGFPYLAGSFRGKRIIYDEKYELQENDSEFLQSGTMQYQRRDRSSKEQGFFRISQFIWDPADPLFLLFKDQPFVSVFSHREFFADEEMSKGLLTSQTDPPTSIYKRWFIKNTQEKHFELLIQRQRWLRTNSSLSNGFFRSNTRSESYQYLSNLFLSNGTLLDRMTKTLLKKRWLFSDEMKIGFM</sequence>
<dbReference type="EMBL" id="AP009372">
    <property type="protein sequence ID" value="BAF50352.1"/>
    <property type="molecule type" value="Genomic_DNA"/>
</dbReference>
<dbReference type="GO" id="GO:0009570">
    <property type="term" value="C:chloroplast stroma"/>
    <property type="evidence" value="ECO:0007669"/>
    <property type="project" value="UniProtKB-SubCell"/>
</dbReference>
<dbReference type="GO" id="GO:0005524">
    <property type="term" value="F:ATP binding"/>
    <property type="evidence" value="ECO:0007669"/>
    <property type="project" value="UniProtKB-KW"/>
</dbReference>
<dbReference type="GO" id="GO:0016887">
    <property type="term" value="F:ATP hydrolysis activity"/>
    <property type="evidence" value="ECO:0007669"/>
    <property type="project" value="InterPro"/>
</dbReference>
<dbReference type="CDD" id="cd19505">
    <property type="entry name" value="RecA-like_Ycf2"/>
    <property type="match status" value="1"/>
</dbReference>
<dbReference type="Gene3D" id="3.40.50.300">
    <property type="entry name" value="P-loop containing nucleotide triphosphate hydrolases"/>
    <property type="match status" value="1"/>
</dbReference>
<dbReference type="HAMAP" id="MF_01330">
    <property type="entry name" value="Ycf2"/>
    <property type="match status" value="1"/>
</dbReference>
<dbReference type="InterPro" id="IPR003593">
    <property type="entry name" value="AAA+_ATPase"/>
</dbReference>
<dbReference type="InterPro" id="IPR003959">
    <property type="entry name" value="ATPase_AAA_core"/>
</dbReference>
<dbReference type="InterPro" id="IPR027417">
    <property type="entry name" value="P-loop_NTPase"/>
</dbReference>
<dbReference type="InterPro" id="IPR008543">
    <property type="entry name" value="Uncharacterised_Ycf2"/>
</dbReference>
<dbReference type="InterPro" id="IPR056777">
    <property type="entry name" value="Ycf2_N"/>
</dbReference>
<dbReference type="PANTHER" id="PTHR33078:SF89">
    <property type="entry name" value="PROTEIN YCF2"/>
    <property type="match status" value="1"/>
</dbReference>
<dbReference type="PANTHER" id="PTHR33078">
    <property type="entry name" value="PROTEIN YCF2-RELATED"/>
    <property type="match status" value="1"/>
</dbReference>
<dbReference type="Pfam" id="PF00004">
    <property type="entry name" value="AAA"/>
    <property type="match status" value="1"/>
</dbReference>
<dbReference type="Pfam" id="PF05695">
    <property type="entry name" value="Ycf2"/>
    <property type="match status" value="1"/>
</dbReference>
<dbReference type="SMART" id="SM00382">
    <property type="entry name" value="AAA"/>
    <property type="match status" value="1"/>
</dbReference>
<dbReference type="SUPFAM" id="SSF52540">
    <property type="entry name" value="P-loop containing nucleoside triphosphate hydrolases"/>
    <property type="match status" value="1"/>
</dbReference>
<name>YCF2B_CRUWA</name>
<accession>A4QKZ7</accession>
<organism>
    <name type="scientific">Crucihimalaya wallichii</name>
    <name type="common">Rock-cress</name>
    <name type="synonym">Arabidopsis campestris</name>
    <dbReference type="NCBI Taxonomy" id="78192"/>
    <lineage>
        <taxon>Eukaryota</taxon>
        <taxon>Viridiplantae</taxon>
        <taxon>Streptophyta</taxon>
        <taxon>Embryophyta</taxon>
        <taxon>Tracheophyta</taxon>
        <taxon>Spermatophyta</taxon>
        <taxon>Magnoliopsida</taxon>
        <taxon>eudicotyledons</taxon>
        <taxon>Gunneridae</taxon>
        <taxon>Pentapetalae</taxon>
        <taxon>rosids</taxon>
        <taxon>malvids</taxon>
        <taxon>Brassicales</taxon>
        <taxon>Brassicaceae</taxon>
        <taxon>Crucihimalayeae</taxon>
        <taxon>Crucihimalaya</taxon>
    </lineage>
</organism>
<evidence type="ECO:0000255" key="1">
    <source>
        <dbReference type="HAMAP-Rule" id="MF_01330"/>
    </source>
</evidence>
<evidence type="ECO:0000305" key="2"/>
<feature type="chain" id="PRO_0000343766" description="Protein Ycf2 B">
    <location>
        <begin position="1"/>
        <end position="2293"/>
    </location>
</feature>
<feature type="binding site" evidence="1">
    <location>
        <begin position="1647"/>
        <end position="1654"/>
    </location>
    <ligand>
        <name>ATP</name>
        <dbReference type="ChEBI" id="CHEBI:30616"/>
    </ligand>
</feature>
<gene>
    <name evidence="1" type="primary">ycf2-B</name>
</gene>
<keyword id="KW-0067">ATP-binding</keyword>
<keyword id="KW-0150">Chloroplast</keyword>
<keyword id="KW-0547">Nucleotide-binding</keyword>
<keyword id="KW-0934">Plastid</keyword>
<reference key="1">
    <citation type="submission" date="2007-03" db="EMBL/GenBank/DDBJ databases">
        <title>Sequencing analysis of Crucihimalaya wallichii chloroplast DNA.</title>
        <authorList>
            <person name="Hosouchi T."/>
            <person name="Tsuruoka H."/>
            <person name="Kotani H."/>
        </authorList>
    </citation>
    <scope>NUCLEOTIDE SEQUENCE [LARGE SCALE GENOMIC DNA]</scope>
</reference>
<geneLocation type="chloroplast"/>
<protein>
    <recommendedName>
        <fullName evidence="1">Protein Ycf2 B</fullName>
    </recommendedName>
</protein>
<proteinExistence type="inferred from homology"/>